<feature type="chain" id="PRO_0000334205" description="Probable ribonuclease FAU-1">
    <location>
        <begin position="1"/>
        <end position="448"/>
    </location>
</feature>
<feature type="region of interest" description="Disordered" evidence="2">
    <location>
        <begin position="426"/>
        <end position="448"/>
    </location>
</feature>
<feature type="compositionally biased region" description="Polar residues" evidence="2">
    <location>
        <begin position="436"/>
        <end position="448"/>
    </location>
</feature>
<sequence length="448" mass="49351">MFKARIRGIYATALTKLALDWGFEIVQPTQQIINRFGLKPDYSPPDITVKDHESKTGVVTIGECQAVDYFLERLRQYVDPVIAKASAGLHDVFIGRVVGEGLVEAPGGQLMEVPRRYVVQPGSTSVFTVVKPPMGPFRGVAVPEIVVEGKLLELNTTGRVSYSRHIAEQERLRLRILAETKLKNYASIGLRFKSSAKYASEDELAKEAEELYKEMLKISQGGPPGTLLRRGKCIAVVLFDRQAKFKLDEARAAVVPTIRGHHALRGQGLGKCLDLLDYAGADVYEKAVEFLARGRVVIYHVKPWGEVIKMRGEVVKISDDVLVVKRPLRPGGVLDGIGAKIEPGTYALTCVPKSGGYVVHSYYSASGVYLGTYVNINTDPEWGRRIIYIDLLVDKAYGLDGVERVLDADELQRYAHMLPERLRRPEAPGGKICTSEGLTSALPQSSSA</sequence>
<keyword id="KW-0255">Endonuclease</keyword>
<keyword id="KW-0378">Hydrolase</keyword>
<keyword id="KW-0540">Nuclease</keyword>
<keyword id="KW-0694">RNA-binding</keyword>
<keyword id="KW-0698">rRNA processing</keyword>
<proteinExistence type="inferred from homology"/>
<dbReference type="EC" id="3.1.26.-" evidence="1"/>
<dbReference type="EMBL" id="CP000504">
    <property type="protein sequence ID" value="ABL87236.1"/>
    <property type="molecule type" value="Genomic_DNA"/>
</dbReference>
<dbReference type="RefSeq" id="WP_011761813.1">
    <property type="nucleotide sequence ID" value="NC_008701.1"/>
</dbReference>
<dbReference type="SMR" id="A1RQK4"/>
<dbReference type="STRING" id="384616.Pisl_0052"/>
<dbReference type="GeneID" id="4616355"/>
<dbReference type="KEGG" id="pis:Pisl_0052"/>
<dbReference type="eggNOG" id="arCOG04307">
    <property type="taxonomic scope" value="Archaea"/>
</dbReference>
<dbReference type="HOGENOM" id="CLU_044303_0_0_2"/>
<dbReference type="OrthoDB" id="84798at2157"/>
<dbReference type="Proteomes" id="UP000002595">
    <property type="component" value="Chromosome"/>
</dbReference>
<dbReference type="GO" id="GO:0035925">
    <property type="term" value="F:mRNA 3'-UTR AU-rich region binding"/>
    <property type="evidence" value="ECO:0007669"/>
    <property type="project" value="UniProtKB-UniRule"/>
</dbReference>
<dbReference type="GO" id="GO:0016891">
    <property type="term" value="F:RNA endonuclease activity, producing 5'-phosphomonoesters"/>
    <property type="evidence" value="ECO:0007669"/>
    <property type="project" value="UniProtKB-UniRule"/>
</dbReference>
<dbReference type="GO" id="GO:0006364">
    <property type="term" value="P:rRNA processing"/>
    <property type="evidence" value="ECO:0007669"/>
    <property type="project" value="UniProtKB-UniRule"/>
</dbReference>
<dbReference type="Gene3D" id="2.40.380.10">
    <property type="entry name" value="FomD-like"/>
    <property type="match status" value="1"/>
</dbReference>
<dbReference type="HAMAP" id="MF_01910">
    <property type="entry name" value="RNA_binding_AU_1"/>
    <property type="match status" value="1"/>
</dbReference>
<dbReference type="InterPro" id="IPR007295">
    <property type="entry name" value="DUF402"/>
</dbReference>
<dbReference type="InterPro" id="IPR035930">
    <property type="entry name" value="FomD-like_sf"/>
</dbReference>
<dbReference type="InterPro" id="IPR050212">
    <property type="entry name" value="Ntdp-like"/>
</dbReference>
<dbReference type="InterPro" id="IPR016730">
    <property type="entry name" value="RNA-bd_FAU-1"/>
</dbReference>
<dbReference type="PANTHER" id="PTHR39159">
    <property type="match status" value="1"/>
</dbReference>
<dbReference type="PANTHER" id="PTHR39159:SF1">
    <property type="entry name" value="UPF0374 PROTEIN YGAC"/>
    <property type="match status" value="1"/>
</dbReference>
<dbReference type="Pfam" id="PF04167">
    <property type="entry name" value="DUF402"/>
    <property type="match status" value="1"/>
</dbReference>
<dbReference type="SUPFAM" id="SSF159234">
    <property type="entry name" value="FomD-like"/>
    <property type="match status" value="1"/>
</dbReference>
<name>FAU1_PYRIL</name>
<reference key="1">
    <citation type="submission" date="2006-12" db="EMBL/GenBank/DDBJ databases">
        <title>Complete sequence of Pyrobaculum islandicum DSM 4184.</title>
        <authorList>
            <person name="Copeland A."/>
            <person name="Lucas S."/>
            <person name="Lapidus A."/>
            <person name="Barry K."/>
            <person name="Detter J.C."/>
            <person name="Glavina del Rio T."/>
            <person name="Dalin E."/>
            <person name="Tice H."/>
            <person name="Pitluck S."/>
            <person name="Meincke L."/>
            <person name="Brettin T."/>
            <person name="Bruce D."/>
            <person name="Han C."/>
            <person name="Tapia R."/>
            <person name="Gilna P."/>
            <person name="Schmutz J."/>
            <person name="Larimer F."/>
            <person name="Land M."/>
            <person name="Hauser L."/>
            <person name="Kyrpides N."/>
            <person name="Mikhailova N."/>
            <person name="Cozen A.E."/>
            <person name="Fitz-Gibbon S.T."/>
            <person name="House C.H."/>
            <person name="Saltikov C."/>
            <person name="Lowe T."/>
            <person name="Richardson P."/>
        </authorList>
    </citation>
    <scope>NUCLEOTIDE SEQUENCE [LARGE SCALE GENOMIC DNA]</scope>
    <source>
        <strain>DSM 4184 / JCM 9189 / GEO3</strain>
    </source>
</reference>
<gene>
    <name evidence="1" type="primary">fau-1</name>
    <name type="ordered locus">Pisl_0052</name>
</gene>
<evidence type="ECO:0000255" key="1">
    <source>
        <dbReference type="HAMAP-Rule" id="MF_01910"/>
    </source>
</evidence>
<evidence type="ECO:0000256" key="2">
    <source>
        <dbReference type="SAM" id="MobiDB-lite"/>
    </source>
</evidence>
<protein>
    <recommendedName>
        <fullName evidence="1">Probable ribonuclease FAU-1</fullName>
        <ecNumber evidence="1">3.1.26.-</ecNumber>
    </recommendedName>
    <alternativeName>
        <fullName evidence="1">RNA-binding protein FAU-1</fullName>
    </alternativeName>
</protein>
<comment type="function">
    <text evidence="1">Probable RNase involved in rRNA stability through maturation and/or degradation of precursor rRNAs. Binds to RNA in loop regions with AU-rich sequences.</text>
</comment>
<comment type="similarity">
    <text evidence="1">Belongs to the FAU-1 family.</text>
</comment>
<accession>A1RQK4</accession>
<organism>
    <name type="scientific">Pyrobaculum islandicum (strain DSM 4184 / JCM 9189 / GEO3)</name>
    <dbReference type="NCBI Taxonomy" id="384616"/>
    <lineage>
        <taxon>Archaea</taxon>
        <taxon>Thermoproteota</taxon>
        <taxon>Thermoprotei</taxon>
        <taxon>Thermoproteales</taxon>
        <taxon>Thermoproteaceae</taxon>
        <taxon>Pyrobaculum</taxon>
    </lineage>
</organism>